<gene>
    <name type="primary">HMX1</name>
    <name type="ordered locus">YLR205C</name>
    <name type="ORF">L8167.18</name>
</gene>
<comment type="function">
    <text evidence="5">Plays an important role in the degradation of heme under conditions of iron deprivation.</text>
</comment>
<comment type="cofactor">
    <cofactor evidence="4">
        <name>heme</name>
        <dbReference type="ChEBI" id="CHEBI:30413"/>
    </cofactor>
    <text evidence="4">Binds 1 heme group.</text>
</comment>
<comment type="subcellular location">
    <subcellularLocation>
        <location evidence="3 5">Endoplasmic reticulum membrane</location>
        <topology evidence="3 5">Single-pass type IV membrane protein</topology>
    </subcellularLocation>
</comment>
<comment type="induction">
    <text evidence="2">By iron deprivation.</text>
</comment>
<comment type="sequence caution" evidence="6">
    <conflict type="frameshift">
        <sequence resource="EMBL-CDS" id="AAB23216"/>
    </conflict>
</comment>
<feature type="chain" id="PRO_0000209704" description="Heme-binding protein HMX1">
    <location>
        <begin position="1"/>
        <end position="317"/>
    </location>
</feature>
<feature type="topological domain" description="Cytoplasmic" evidence="1">
    <location>
        <begin position="1"/>
        <end position="289"/>
    </location>
</feature>
<feature type="transmembrane region" description="Helical; Anchor for type IV membrane protein" evidence="1">
    <location>
        <begin position="290"/>
        <end position="310"/>
    </location>
</feature>
<feature type="sequence conflict" description="In Ref. 5; AAB23216." evidence="6" ref="5">
    <original>Q</original>
    <variation>H</variation>
    <location>
        <position position="128"/>
    </location>
</feature>
<feature type="sequence conflict" description="In Ref. 5; AAB23216." evidence="6" ref="5">
    <original>A</original>
    <variation>V</variation>
    <location>
        <position position="285"/>
    </location>
</feature>
<feature type="sequence conflict" description="In Ref. 5; AAB23216." evidence="6" ref="5">
    <original>V</original>
    <variation>VK</variation>
    <location>
        <position position="310"/>
    </location>
</feature>
<evidence type="ECO:0000255" key="1"/>
<evidence type="ECO:0000269" key="2">
    <source>
    </source>
</evidence>
<evidence type="ECO:0000269" key="3">
    <source>
    </source>
</evidence>
<evidence type="ECO:0000269" key="4">
    <source>
    </source>
</evidence>
<evidence type="ECO:0000269" key="5">
    <source>
    </source>
</evidence>
<evidence type="ECO:0000305" key="6"/>
<organism>
    <name type="scientific">Saccharomyces cerevisiae (strain ATCC 204508 / S288c)</name>
    <name type="common">Baker's yeast</name>
    <dbReference type="NCBI Taxonomy" id="559292"/>
    <lineage>
        <taxon>Eukaryota</taxon>
        <taxon>Fungi</taxon>
        <taxon>Dikarya</taxon>
        <taxon>Ascomycota</taxon>
        <taxon>Saccharomycotina</taxon>
        <taxon>Saccharomycetes</taxon>
        <taxon>Saccharomycetales</taxon>
        <taxon>Saccharomycetaceae</taxon>
        <taxon>Saccharomyces</taxon>
    </lineage>
</organism>
<name>HMX1_YEAST</name>
<reference key="1">
    <citation type="journal article" date="1997" name="Nature">
        <title>The nucleotide sequence of Saccharomyces cerevisiae chromosome XII.</title>
        <authorList>
            <person name="Johnston M."/>
            <person name="Hillier L.W."/>
            <person name="Riles L."/>
            <person name="Albermann K."/>
            <person name="Andre B."/>
            <person name="Ansorge W."/>
            <person name="Benes V."/>
            <person name="Brueckner M."/>
            <person name="Delius H."/>
            <person name="Dubois E."/>
            <person name="Duesterhoeft A."/>
            <person name="Entian K.-D."/>
            <person name="Floeth M."/>
            <person name="Goffeau A."/>
            <person name="Hebling U."/>
            <person name="Heumann K."/>
            <person name="Heuss-Neitzel D."/>
            <person name="Hilbert H."/>
            <person name="Hilger F."/>
            <person name="Kleine K."/>
            <person name="Koetter P."/>
            <person name="Louis E.J."/>
            <person name="Messenguy F."/>
            <person name="Mewes H.-W."/>
            <person name="Miosga T."/>
            <person name="Moestl D."/>
            <person name="Mueller-Auer S."/>
            <person name="Nentwich U."/>
            <person name="Obermaier B."/>
            <person name="Piravandi E."/>
            <person name="Pohl T.M."/>
            <person name="Portetelle D."/>
            <person name="Purnelle B."/>
            <person name="Rechmann S."/>
            <person name="Rieger M."/>
            <person name="Rinke M."/>
            <person name="Rose M."/>
            <person name="Scharfe M."/>
            <person name="Scherens B."/>
            <person name="Scholler P."/>
            <person name="Schwager C."/>
            <person name="Schwarz S."/>
            <person name="Underwood A.P."/>
            <person name="Urrestarazu L.A."/>
            <person name="Vandenbol M."/>
            <person name="Verhasselt P."/>
            <person name="Vierendeels F."/>
            <person name="Voet M."/>
            <person name="Volckaert G."/>
            <person name="Voss H."/>
            <person name="Wambutt R."/>
            <person name="Wedler E."/>
            <person name="Wedler H."/>
            <person name="Zimmermann F.K."/>
            <person name="Zollner A."/>
            <person name="Hani J."/>
            <person name="Hoheisel J.D."/>
        </authorList>
    </citation>
    <scope>NUCLEOTIDE SEQUENCE [LARGE SCALE GENOMIC DNA]</scope>
    <source>
        <strain>ATCC 204508 / S288c</strain>
    </source>
</reference>
<reference key="2">
    <citation type="submission" date="2004-02" db="EMBL/GenBank/DDBJ databases">
        <authorList>
            <person name="Hong E.L."/>
            <person name="Cherry J.M."/>
        </authorList>
    </citation>
    <scope>SEQUENCE REVISION TO N-TERMINUS</scope>
</reference>
<reference key="3">
    <citation type="journal article" date="2014" name="G3 (Bethesda)">
        <title>The reference genome sequence of Saccharomyces cerevisiae: Then and now.</title>
        <authorList>
            <person name="Engel S.R."/>
            <person name="Dietrich F.S."/>
            <person name="Fisk D.G."/>
            <person name="Binkley G."/>
            <person name="Balakrishnan R."/>
            <person name="Costanzo M.C."/>
            <person name="Dwight S.S."/>
            <person name="Hitz B.C."/>
            <person name="Karra K."/>
            <person name="Nash R.S."/>
            <person name="Weng S."/>
            <person name="Wong E.D."/>
            <person name="Lloyd P."/>
            <person name="Skrzypek M.S."/>
            <person name="Miyasato S.R."/>
            <person name="Simison M."/>
            <person name="Cherry J.M."/>
        </authorList>
    </citation>
    <scope>GENOME REANNOTATION</scope>
    <source>
        <strain>ATCC 204508 / S288c</strain>
    </source>
</reference>
<reference key="4">
    <citation type="journal article" date="2003" name="Genome Biol.">
        <title>Reinvestigation of the Saccharomyces cerevisiae genome annotation by comparison to the genome of a related fungus: Ashbya gossypii.</title>
        <authorList>
            <person name="Brachat S."/>
            <person name="Dietrich F.S."/>
            <person name="Voegeli S."/>
            <person name="Zhang Z."/>
            <person name="Stuart L."/>
            <person name="Lerch A."/>
            <person name="Gates K."/>
            <person name="Gaffney T.D."/>
            <person name="Philippsen P."/>
        </authorList>
    </citation>
    <scope>NUCLEOTIDE SEQUENCE [GENOMIC DNA] OF 1-80</scope>
    <source>
        <strain>ATCC 204508 / S288c</strain>
    </source>
</reference>
<reference key="5">
    <citation type="journal article" date="1992" name="Yeast">
        <title>Analysis of the MSS51 region on chromosome XII of Saccharomyces cerevisiae.</title>
        <authorList>
            <person name="Simon M."/>
            <person name="della Seta F."/>
            <person name="Sor F."/>
            <person name="Faye G."/>
        </authorList>
    </citation>
    <scope>NUCLEOTIDE SEQUENCE [GENOMIC DNA] OF 122-317</scope>
</reference>
<reference key="6">
    <citation type="journal article" date="2003" name="J. Biol. Chem.">
        <title>Regulation of intracellular heme levels by HMX1, a homologue of heme oxygenase, in Saccharomyces cerevisiae.</title>
        <authorList>
            <person name="Protchenko O."/>
            <person name="Philpott C.C."/>
        </authorList>
    </citation>
    <scope>FUNCTION</scope>
    <scope>SUBCELLULAR LOCATION</scope>
</reference>
<reference key="7">
    <citation type="journal article" date="2003" name="Protein Expr. Purif.">
        <title>Cloning and expression of a heme binding protein from the genome of Saccharomyces cerevisiae.</title>
        <authorList>
            <person name="Auclair K."/>
            <person name="Huang H.-W."/>
            <person name="Moenne-Loccoz P."/>
            <person name="Ortiz de Montellano P.R."/>
        </authorList>
    </citation>
    <scope>COFACTOR</scope>
</reference>
<reference key="8">
    <citation type="journal article" date="2001" name="EMBO J.">
        <title>Sorting of proteins into multivesicular bodies: ubiquitin-dependent and -independent targeting.</title>
        <authorList>
            <person name="Reggiori F."/>
            <person name="Pelham H.R.B."/>
        </authorList>
    </citation>
    <scope>SUBCELLULAR LOCATION</scope>
</reference>
<reference key="9">
    <citation type="journal article" date="2001" name="J. Biol. Chem.">
        <title>Mitochondrial control of iron homeostasis. A genome wide analysis of gene expression in a yeast frataxin-deficient strain.</title>
        <authorList>
            <person name="Foury F."/>
            <person name="Talibi D."/>
        </authorList>
    </citation>
    <scope>INDUCTION</scope>
</reference>
<protein>
    <recommendedName>
        <fullName>Heme-binding protein HMX1</fullName>
    </recommendedName>
</protein>
<keyword id="KW-0256">Endoplasmic reticulum</keyword>
<keyword id="KW-0349">Heme</keyword>
<keyword id="KW-0408">Iron</keyword>
<keyword id="KW-0472">Membrane</keyword>
<keyword id="KW-0479">Metal-binding</keyword>
<keyword id="KW-1185">Reference proteome</keyword>
<keyword id="KW-0812">Transmembrane</keyword>
<keyword id="KW-1133">Transmembrane helix</keyword>
<accession>P32339</accession>
<accession>D6VYK6</accession>
<accession>Q05782</accession>
<accession>Q86ZS9</accession>
<dbReference type="EMBL" id="U14913">
    <property type="protein sequence ID" value="AAB67439.2"/>
    <property type="molecule type" value="Genomic_DNA"/>
</dbReference>
<dbReference type="EMBL" id="AY260884">
    <property type="protein sequence ID" value="AAP21752.1"/>
    <property type="molecule type" value="Genomic_DNA"/>
</dbReference>
<dbReference type="EMBL" id="S43721">
    <property type="protein sequence ID" value="AAB23216.1"/>
    <property type="status" value="ALT_FRAME"/>
    <property type="molecule type" value="Genomic_DNA"/>
</dbReference>
<dbReference type="EMBL" id="BK006945">
    <property type="protein sequence ID" value="DAA09522.1"/>
    <property type="molecule type" value="Genomic_DNA"/>
</dbReference>
<dbReference type="PIR" id="S48556">
    <property type="entry name" value="S48556"/>
</dbReference>
<dbReference type="RefSeq" id="NP_013306.2">
    <property type="nucleotide sequence ID" value="NM_001182092.1"/>
</dbReference>
<dbReference type="SMR" id="P32339"/>
<dbReference type="BioGRID" id="31473">
    <property type="interactions" value="101"/>
</dbReference>
<dbReference type="DIP" id="DIP-5080N"/>
<dbReference type="FunCoup" id="P32339">
    <property type="interactions" value="109"/>
</dbReference>
<dbReference type="IntAct" id="P32339">
    <property type="interactions" value="1"/>
</dbReference>
<dbReference type="STRING" id="4932.YLR205C"/>
<dbReference type="PaxDb" id="4932-YLR205C"/>
<dbReference type="PeptideAtlas" id="P32339"/>
<dbReference type="EnsemblFungi" id="YLR205C_mRNA">
    <property type="protein sequence ID" value="YLR205C"/>
    <property type="gene ID" value="YLR205C"/>
</dbReference>
<dbReference type="GeneID" id="850902"/>
<dbReference type="KEGG" id="sce:YLR205C"/>
<dbReference type="AGR" id="SGD:S000004195"/>
<dbReference type="SGD" id="S000004195">
    <property type="gene designation" value="HMX1"/>
</dbReference>
<dbReference type="VEuPathDB" id="FungiDB:YLR205C"/>
<dbReference type="eggNOG" id="KOG4480">
    <property type="taxonomic scope" value="Eukaryota"/>
</dbReference>
<dbReference type="GeneTree" id="ENSGT00390000017673"/>
<dbReference type="HOGENOM" id="CLU_049906_0_0_1"/>
<dbReference type="InParanoid" id="P32339"/>
<dbReference type="OMA" id="YYVFDAI"/>
<dbReference type="OrthoDB" id="652091at2759"/>
<dbReference type="BioCyc" id="YEAST:YLR205C-MONOMER"/>
<dbReference type="BioGRID-ORCS" id="850902">
    <property type="hits" value="6 hits in 10 CRISPR screens"/>
</dbReference>
<dbReference type="PRO" id="PR:P32339"/>
<dbReference type="Proteomes" id="UP000002311">
    <property type="component" value="Chromosome XII"/>
</dbReference>
<dbReference type="RNAct" id="P32339">
    <property type="molecule type" value="protein"/>
</dbReference>
<dbReference type="GO" id="GO:0005783">
    <property type="term" value="C:endoplasmic reticulum"/>
    <property type="evidence" value="ECO:0000314"/>
    <property type="project" value="SGD"/>
</dbReference>
<dbReference type="GO" id="GO:0005789">
    <property type="term" value="C:endoplasmic reticulum membrane"/>
    <property type="evidence" value="ECO:0007669"/>
    <property type="project" value="UniProtKB-SubCell"/>
</dbReference>
<dbReference type="GO" id="GO:0016020">
    <property type="term" value="C:membrane"/>
    <property type="evidence" value="ECO:0000314"/>
    <property type="project" value="SGD"/>
</dbReference>
<dbReference type="GO" id="GO:0005640">
    <property type="term" value="C:nuclear outer membrane"/>
    <property type="evidence" value="ECO:0000314"/>
    <property type="project" value="SGD"/>
</dbReference>
<dbReference type="GO" id="GO:0004392">
    <property type="term" value="F:heme oxygenase (decyclizing) activity"/>
    <property type="evidence" value="ECO:0000314"/>
    <property type="project" value="SGD"/>
</dbReference>
<dbReference type="GO" id="GO:0046872">
    <property type="term" value="F:metal ion binding"/>
    <property type="evidence" value="ECO:0007669"/>
    <property type="project" value="UniProtKB-KW"/>
</dbReference>
<dbReference type="GO" id="GO:0042167">
    <property type="term" value="P:heme catabolic process"/>
    <property type="evidence" value="ECO:0000315"/>
    <property type="project" value="SGD"/>
</dbReference>
<dbReference type="GO" id="GO:0006788">
    <property type="term" value="P:heme oxidation"/>
    <property type="evidence" value="ECO:0007669"/>
    <property type="project" value="InterPro"/>
</dbReference>
<dbReference type="GO" id="GO:0006879">
    <property type="term" value="P:intracellular iron ion homeostasis"/>
    <property type="evidence" value="ECO:0000315"/>
    <property type="project" value="SGD"/>
</dbReference>
<dbReference type="GO" id="GO:0006979">
    <property type="term" value="P:response to oxidative stress"/>
    <property type="evidence" value="ECO:0000315"/>
    <property type="project" value="SGD"/>
</dbReference>
<dbReference type="CDD" id="cd19165">
    <property type="entry name" value="HemeO"/>
    <property type="match status" value="1"/>
</dbReference>
<dbReference type="FunFam" id="1.20.910.10:FF:000008">
    <property type="entry name" value="Heme oxygenase"/>
    <property type="match status" value="1"/>
</dbReference>
<dbReference type="Gene3D" id="1.20.910.10">
    <property type="entry name" value="Heme oxygenase-like"/>
    <property type="match status" value="1"/>
</dbReference>
<dbReference type="InterPro" id="IPR002051">
    <property type="entry name" value="Haem_Oase"/>
</dbReference>
<dbReference type="InterPro" id="IPR016053">
    <property type="entry name" value="Haem_Oase-like"/>
</dbReference>
<dbReference type="InterPro" id="IPR016084">
    <property type="entry name" value="Haem_Oase-like_multi-hlx"/>
</dbReference>
<dbReference type="PANTHER" id="PTHR10720">
    <property type="entry name" value="HEME OXYGENASE"/>
    <property type="match status" value="1"/>
</dbReference>
<dbReference type="PANTHER" id="PTHR10720:SF0">
    <property type="entry name" value="HEME OXYGENASE"/>
    <property type="match status" value="1"/>
</dbReference>
<dbReference type="Pfam" id="PF01126">
    <property type="entry name" value="Heme_oxygenase"/>
    <property type="match status" value="1"/>
</dbReference>
<dbReference type="PIRSF" id="PIRSF000343">
    <property type="entry name" value="Haem_Oase"/>
    <property type="match status" value="1"/>
</dbReference>
<dbReference type="SUPFAM" id="SSF48613">
    <property type="entry name" value="Heme oxygenase-like"/>
    <property type="match status" value="1"/>
</dbReference>
<proteinExistence type="evidence at transcript level"/>
<sequence length="317" mass="37179">MEDSSNTIIPSPTDVGALANRINFQTRDAHNKINTFMGIKMAIAMRHGFIYRQGILAYYYVFDAIEQEIDRLLNDPVTEEELQTSTILKQFWLEDFRRSTQIYKDLKLLYSNTFKSTESLNEFLATFQKPPLLQQFINNIHENIHKEPCTILSYCHVLYLALFAGGKLIRSNLYRRLGLFPNFEKLSQKELVKKGTNFFTFSDLGPTEETRLKWEYKKNYELATRTELTEAQKLQIISVAEGIFDWNFNIVAEIGELNRRELMGKFSFKCITYLYEEWMFNKDSATRRALHTVMLLVLSIIAIWVLYFLVKSFLSIV</sequence>